<feature type="chain" id="PRO_1000126916" description="Large ribosomal subunit protein bL9">
    <location>
        <begin position="1"/>
        <end position="148"/>
    </location>
</feature>
<organism>
    <name type="scientific">Finegoldia magna (strain ATCC 29328 / DSM 20472 / WAL 2508)</name>
    <name type="common">Peptostreptococcus magnus</name>
    <dbReference type="NCBI Taxonomy" id="334413"/>
    <lineage>
        <taxon>Bacteria</taxon>
        <taxon>Bacillati</taxon>
        <taxon>Bacillota</taxon>
        <taxon>Tissierellia</taxon>
        <taxon>Tissierellales</taxon>
        <taxon>Peptoniphilaceae</taxon>
        <taxon>Finegoldia</taxon>
    </lineage>
</organism>
<gene>
    <name evidence="1" type="primary">rplI</name>
    <name type="ordered locus">FMG_0089</name>
</gene>
<comment type="function">
    <text evidence="1">Binds to the 23S rRNA.</text>
</comment>
<comment type="similarity">
    <text evidence="1">Belongs to the bacterial ribosomal protein bL9 family.</text>
</comment>
<keyword id="KW-1185">Reference proteome</keyword>
<keyword id="KW-0687">Ribonucleoprotein</keyword>
<keyword id="KW-0689">Ribosomal protein</keyword>
<keyword id="KW-0694">RNA-binding</keyword>
<keyword id="KW-0699">rRNA-binding</keyword>
<dbReference type="EMBL" id="AP008971">
    <property type="protein sequence ID" value="BAG07507.1"/>
    <property type="molecule type" value="Genomic_DNA"/>
</dbReference>
<dbReference type="RefSeq" id="WP_012290168.1">
    <property type="nucleotide sequence ID" value="NC_010376.1"/>
</dbReference>
<dbReference type="SMR" id="B0RZP8"/>
<dbReference type="STRING" id="334413.FMG_0089"/>
<dbReference type="KEGG" id="fma:FMG_0089"/>
<dbReference type="eggNOG" id="COG0359">
    <property type="taxonomic scope" value="Bacteria"/>
</dbReference>
<dbReference type="HOGENOM" id="CLU_078938_3_0_9"/>
<dbReference type="Proteomes" id="UP000001319">
    <property type="component" value="Chromosome"/>
</dbReference>
<dbReference type="GO" id="GO:1990904">
    <property type="term" value="C:ribonucleoprotein complex"/>
    <property type="evidence" value="ECO:0007669"/>
    <property type="project" value="UniProtKB-KW"/>
</dbReference>
<dbReference type="GO" id="GO:0005840">
    <property type="term" value="C:ribosome"/>
    <property type="evidence" value="ECO:0007669"/>
    <property type="project" value="UniProtKB-KW"/>
</dbReference>
<dbReference type="GO" id="GO:0019843">
    <property type="term" value="F:rRNA binding"/>
    <property type="evidence" value="ECO:0007669"/>
    <property type="project" value="UniProtKB-UniRule"/>
</dbReference>
<dbReference type="GO" id="GO:0003735">
    <property type="term" value="F:structural constituent of ribosome"/>
    <property type="evidence" value="ECO:0007669"/>
    <property type="project" value="InterPro"/>
</dbReference>
<dbReference type="GO" id="GO:0006412">
    <property type="term" value="P:translation"/>
    <property type="evidence" value="ECO:0007669"/>
    <property type="project" value="UniProtKB-UniRule"/>
</dbReference>
<dbReference type="Gene3D" id="3.10.430.100">
    <property type="entry name" value="Ribosomal protein L9, C-terminal domain"/>
    <property type="match status" value="1"/>
</dbReference>
<dbReference type="Gene3D" id="3.40.5.10">
    <property type="entry name" value="Ribosomal protein L9, N-terminal domain"/>
    <property type="match status" value="1"/>
</dbReference>
<dbReference type="HAMAP" id="MF_00503">
    <property type="entry name" value="Ribosomal_bL9"/>
    <property type="match status" value="1"/>
</dbReference>
<dbReference type="InterPro" id="IPR000244">
    <property type="entry name" value="Ribosomal_bL9"/>
</dbReference>
<dbReference type="InterPro" id="IPR009027">
    <property type="entry name" value="Ribosomal_bL9/RNase_H1_N"/>
</dbReference>
<dbReference type="InterPro" id="IPR020594">
    <property type="entry name" value="Ribosomal_bL9_bac/chp"/>
</dbReference>
<dbReference type="InterPro" id="IPR020069">
    <property type="entry name" value="Ribosomal_bL9_C"/>
</dbReference>
<dbReference type="InterPro" id="IPR036791">
    <property type="entry name" value="Ribosomal_bL9_C_sf"/>
</dbReference>
<dbReference type="InterPro" id="IPR020070">
    <property type="entry name" value="Ribosomal_bL9_N"/>
</dbReference>
<dbReference type="InterPro" id="IPR036935">
    <property type="entry name" value="Ribosomal_bL9_N_sf"/>
</dbReference>
<dbReference type="NCBIfam" id="TIGR00158">
    <property type="entry name" value="L9"/>
    <property type="match status" value="1"/>
</dbReference>
<dbReference type="PANTHER" id="PTHR21368">
    <property type="entry name" value="50S RIBOSOMAL PROTEIN L9"/>
    <property type="match status" value="1"/>
</dbReference>
<dbReference type="Pfam" id="PF03948">
    <property type="entry name" value="Ribosomal_L9_C"/>
    <property type="match status" value="1"/>
</dbReference>
<dbReference type="Pfam" id="PF01281">
    <property type="entry name" value="Ribosomal_L9_N"/>
    <property type="match status" value="1"/>
</dbReference>
<dbReference type="SUPFAM" id="SSF55658">
    <property type="entry name" value="L9 N-domain-like"/>
    <property type="match status" value="1"/>
</dbReference>
<dbReference type="SUPFAM" id="SSF55653">
    <property type="entry name" value="Ribosomal protein L9 C-domain"/>
    <property type="match status" value="1"/>
</dbReference>
<dbReference type="PROSITE" id="PS00651">
    <property type="entry name" value="RIBOSOMAL_L9"/>
    <property type="match status" value="1"/>
</dbReference>
<sequence>MKVILTSDVDKLGKAGEMVNAKTGFARNFLLPNKLAVQATKENIKIWEEKQAELRAIERENIKKANELKEKIENTKVKIIAKTGEGDRLFGSITSMDIEKALKEQHGLDVDKKKIEMKDNIKSLGTFNVVVKVYPDINANLEVIVDKE</sequence>
<protein>
    <recommendedName>
        <fullName evidence="1">Large ribosomal subunit protein bL9</fullName>
    </recommendedName>
    <alternativeName>
        <fullName evidence="2">50S ribosomal protein L9</fullName>
    </alternativeName>
</protein>
<name>RL9_FINM2</name>
<proteinExistence type="inferred from homology"/>
<reference key="1">
    <citation type="journal article" date="2008" name="DNA Res.">
        <title>Complete genome sequence of Finegoldia magna, an anaerobic opportunistic pathogen.</title>
        <authorList>
            <person name="Goto T."/>
            <person name="Yamashita A."/>
            <person name="Hirakawa H."/>
            <person name="Matsutani M."/>
            <person name="Todo K."/>
            <person name="Ohshima K."/>
            <person name="Toh H."/>
            <person name="Miyamoto K."/>
            <person name="Kuhara S."/>
            <person name="Hattori M."/>
            <person name="Shimizu T."/>
            <person name="Akimoto S."/>
        </authorList>
    </citation>
    <scope>NUCLEOTIDE SEQUENCE [LARGE SCALE GENOMIC DNA]</scope>
    <source>
        <strain>ATCC 29328 / DSM 20472 / WAL 2508</strain>
    </source>
</reference>
<evidence type="ECO:0000255" key="1">
    <source>
        <dbReference type="HAMAP-Rule" id="MF_00503"/>
    </source>
</evidence>
<evidence type="ECO:0000305" key="2"/>
<accession>B0RZP8</accession>